<dbReference type="EC" id="2.8.1.6" evidence="1"/>
<dbReference type="EMBL" id="CP000325">
    <property type="protein sequence ID" value="ABL04074.1"/>
    <property type="molecule type" value="Genomic_DNA"/>
</dbReference>
<dbReference type="SMR" id="A0PP05"/>
<dbReference type="KEGG" id="mul:MUL_1563"/>
<dbReference type="eggNOG" id="COG0502">
    <property type="taxonomic scope" value="Bacteria"/>
</dbReference>
<dbReference type="HOGENOM" id="CLU_033172_2_1_11"/>
<dbReference type="UniPathway" id="UPA00078">
    <property type="reaction ID" value="UER00162"/>
</dbReference>
<dbReference type="Proteomes" id="UP000000765">
    <property type="component" value="Chromosome"/>
</dbReference>
<dbReference type="GO" id="GO:0051537">
    <property type="term" value="F:2 iron, 2 sulfur cluster binding"/>
    <property type="evidence" value="ECO:0007669"/>
    <property type="project" value="UniProtKB-KW"/>
</dbReference>
<dbReference type="GO" id="GO:0051539">
    <property type="term" value="F:4 iron, 4 sulfur cluster binding"/>
    <property type="evidence" value="ECO:0007669"/>
    <property type="project" value="UniProtKB-KW"/>
</dbReference>
<dbReference type="GO" id="GO:0004076">
    <property type="term" value="F:biotin synthase activity"/>
    <property type="evidence" value="ECO:0007669"/>
    <property type="project" value="UniProtKB-UniRule"/>
</dbReference>
<dbReference type="GO" id="GO:0005506">
    <property type="term" value="F:iron ion binding"/>
    <property type="evidence" value="ECO:0007669"/>
    <property type="project" value="UniProtKB-UniRule"/>
</dbReference>
<dbReference type="GO" id="GO:0009102">
    <property type="term" value="P:biotin biosynthetic process"/>
    <property type="evidence" value="ECO:0007669"/>
    <property type="project" value="UniProtKB-UniRule"/>
</dbReference>
<dbReference type="CDD" id="cd01335">
    <property type="entry name" value="Radical_SAM"/>
    <property type="match status" value="1"/>
</dbReference>
<dbReference type="FunFam" id="3.20.20.70:FF:000026">
    <property type="entry name" value="Biotin synthase"/>
    <property type="match status" value="1"/>
</dbReference>
<dbReference type="Gene3D" id="3.20.20.70">
    <property type="entry name" value="Aldolase class I"/>
    <property type="match status" value="1"/>
</dbReference>
<dbReference type="HAMAP" id="MF_01694">
    <property type="entry name" value="BioB"/>
    <property type="match status" value="1"/>
</dbReference>
<dbReference type="InterPro" id="IPR013785">
    <property type="entry name" value="Aldolase_TIM"/>
</dbReference>
<dbReference type="InterPro" id="IPR010722">
    <property type="entry name" value="BATS_dom"/>
</dbReference>
<dbReference type="InterPro" id="IPR002684">
    <property type="entry name" value="Biotin_synth/BioAB"/>
</dbReference>
<dbReference type="InterPro" id="IPR024177">
    <property type="entry name" value="Biotin_synthase"/>
</dbReference>
<dbReference type="InterPro" id="IPR006638">
    <property type="entry name" value="Elp3/MiaA/NifB-like_rSAM"/>
</dbReference>
<dbReference type="InterPro" id="IPR007197">
    <property type="entry name" value="rSAM"/>
</dbReference>
<dbReference type="NCBIfam" id="TIGR00433">
    <property type="entry name" value="bioB"/>
    <property type="match status" value="1"/>
</dbReference>
<dbReference type="PANTHER" id="PTHR22976">
    <property type="entry name" value="BIOTIN SYNTHASE"/>
    <property type="match status" value="1"/>
</dbReference>
<dbReference type="PANTHER" id="PTHR22976:SF2">
    <property type="entry name" value="BIOTIN SYNTHASE, MITOCHONDRIAL"/>
    <property type="match status" value="1"/>
</dbReference>
<dbReference type="Pfam" id="PF06968">
    <property type="entry name" value="BATS"/>
    <property type="match status" value="1"/>
</dbReference>
<dbReference type="Pfam" id="PF04055">
    <property type="entry name" value="Radical_SAM"/>
    <property type="match status" value="1"/>
</dbReference>
<dbReference type="PIRSF" id="PIRSF001619">
    <property type="entry name" value="Biotin_synth"/>
    <property type="match status" value="1"/>
</dbReference>
<dbReference type="SFLD" id="SFLDG01082">
    <property type="entry name" value="B12-binding_domain_containing"/>
    <property type="match status" value="1"/>
</dbReference>
<dbReference type="SFLD" id="SFLDG01060">
    <property type="entry name" value="BATS_domain_containing"/>
    <property type="match status" value="1"/>
</dbReference>
<dbReference type="SFLD" id="SFLDG01278">
    <property type="entry name" value="biotin_synthase_like"/>
    <property type="match status" value="1"/>
</dbReference>
<dbReference type="SMART" id="SM00876">
    <property type="entry name" value="BATS"/>
    <property type="match status" value="1"/>
</dbReference>
<dbReference type="SMART" id="SM00729">
    <property type="entry name" value="Elp3"/>
    <property type="match status" value="1"/>
</dbReference>
<dbReference type="SUPFAM" id="SSF102114">
    <property type="entry name" value="Radical SAM enzymes"/>
    <property type="match status" value="1"/>
</dbReference>
<dbReference type="PROSITE" id="PS51918">
    <property type="entry name" value="RADICAL_SAM"/>
    <property type="match status" value="1"/>
</dbReference>
<protein>
    <recommendedName>
        <fullName evidence="1">Biotin synthase</fullName>
        <ecNumber evidence="1">2.8.1.6</ecNumber>
    </recommendedName>
</protein>
<gene>
    <name evidence="1" type="primary">bioB</name>
    <name type="ordered locus">MUL_1563</name>
</gene>
<evidence type="ECO:0000255" key="1">
    <source>
        <dbReference type="HAMAP-Rule" id="MF_01694"/>
    </source>
</evidence>
<evidence type="ECO:0000255" key="2">
    <source>
        <dbReference type="PROSITE-ProRule" id="PRU01266"/>
    </source>
</evidence>
<evidence type="ECO:0000256" key="3">
    <source>
        <dbReference type="SAM" id="MobiDB-lite"/>
    </source>
</evidence>
<comment type="function">
    <text evidence="1">Catalyzes the conversion of dethiobiotin (DTB) to biotin by the insertion of a sulfur atom into dethiobiotin via a radical-based mechanism.</text>
</comment>
<comment type="catalytic activity">
    <reaction evidence="1">
        <text>(4R,5S)-dethiobiotin + (sulfur carrier)-SH + 2 reduced [2Fe-2S]-[ferredoxin] + 2 S-adenosyl-L-methionine = (sulfur carrier)-H + biotin + 2 5'-deoxyadenosine + 2 L-methionine + 2 oxidized [2Fe-2S]-[ferredoxin]</text>
        <dbReference type="Rhea" id="RHEA:22060"/>
        <dbReference type="Rhea" id="RHEA-COMP:10000"/>
        <dbReference type="Rhea" id="RHEA-COMP:10001"/>
        <dbReference type="Rhea" id="RHEA-COMP:14737"/>
        <dbReference type="Rhea" id="RHEA-COMP:14739"/>
        <dbReference type="ChEBI" id="CHEBI:17319"/>
        <dbReference type="ChEBI" id="CHEBI:29917"/>
        <dbReference type="ChEBI" id="CHEBI:33737"/>
        <dbReference type="ChEBI" id="CHEBI:33738"/>
        <dbReference type="ChEBI" id="CHEBI:57586"/>
        <dbReference type="ChEBI" id="CHEBI:57844"/>
        <dbReference type="ChEBI" id="CHEBI:59789"/>
        <dbReference type="ChEBI" id="CHEBI:64428"/>
        <dbReference type="ChEBI" id="CHEBI:149473"/>
        <dbReference type="EC" id="2.8.1.6"/>
    </reaction>
</comment>
<comment type="cofactor">
    <cofactor evidence="1">
        <name>[4Fe-4S] cluster</name>
        <dbReference type="ChEBI" id="CHEBI:49883"/>
    </cofactor>
    <text evidence="1">Binds 1 [4Fe-4S] cluster. The cluster is coordinated with 3 cysteines and an exchangeable S-adenosyl-L-methionine.</text>
</comment>
<comment type="cofactor">
    <cofactor evidence="1">
        <name>[2Fe-2S] cluster</name>
        <dbReference type="ChEBI" id="CHEBI:190135"/>
    </cofactor>
    <text evidence="1">Binds 1 [2Fe-2S] cluster. The cluster is coordinated with 3 cysteines and 1 arginine.</text>
</comment>
<comment type="pathway">
    <text evidence="1">Cofactor biosynthesis; biotin biosynthesis; biotin from 7,8-diaminononanoate: step 2/2.</text>
</comment>
<comment type="subunit">
    <text evidence="1">Homodimer.</text>
</comment>
<comment type="similarity">
    <text evidence="1">Belongs to the radical SAM superfamily. Biotin synthase family.</text>
</comment>
<reference key="1">
    <citation type="journal article" date="2007" name="Genome Res.">
        <title>Reductive evolution and niche adaptation inferred from the genome of Mycobacterium ulcerans, the causative agent of Buruli ulcer.</title>
        <authorList>
            <person name="Stinear T.P."/>
            <person name="Seemann T."/>
            <person name="Pidot S."/>
            <person name="Frigui W."/>
            <person name="Reysset G."/>
            <person name="Garnier T."/>
            <person name="Meurice G."/>
            <person name="Simon D."/>
            <person name="Bouchier C."/>
            <person name="Ma L."/>
            <person name="Tichit M."/>
            <person name="Porter J.L."/>
            <person name="Ryan J."/>
            <person name="Johnson P.D.R."/>
            <person name="Davies J.K."/>
            <person name="Jenkin G.A."/>
            <person name="Small P.L.C."/>
            <person name="Jones L.M."/>
            <person name="Tekaia F."/>
            <person name="Laval F."/>
            <person name="Daffe M."/>
            <person name="Parkhill J."/>
            <person name="Cole S.T."/>
        </authorList>
    </citation>
    <scope>NUCLEOTIDE SEQUENCE [LARGE SCALE GENOMIC DNA]</scope>
    <source>
        <strain>Agy99</strain>
    </source>
</reference>
<keyword id="KW-0001">2Fe-2S</keyword>
<keyword id="KW-0004">4Fe-4S</keyword>
<keyword id="KW-0093">Biotin biosynthesis</keyword>
<keyword id="KW-0408">Iron</keyword>
<keyword id="KW-0411">Iron-sulfur</keyword>
<keyword id="KW-0479">Metal-binding</keyword>
<keyword id="KW-0949">S-adenosyl-L-methionine</keyword>
<keyword id="KW-0808">Transferase</keyword>
<organism>
    <name type="scientific">Mycobacterium ulcerans (strain Agy99)</name>
    <dbReference type="NCBI Taxonomy" id="362242"/>
    <lineage>
        <taxon>Bacteria</taxon>
        <taxon>Bacillati</taxon>
        <taxon>Actinomycetota</taxon>
        <taxon>Actinomycetes</taxon>
        <taxon>Mycobacteriales</taxon>
        <taxon>Mycobacteriaceae</taxon>
        <taxon>Mycobacterium</taxon>
        <taxon>Mycobacterium ulcerans group</taxon>
    </lineage>
</organism>
<proteinExistence type="inferred from homology"/>
<sequence length="350" mass="37726">MVTQAATRPSNDAGQDGVTEPDILAVARQQVLERGEGLNQEQVLQVLQLSEDRLEELLVLAHDVRMRWCGPEVEVEGIISLKTGGCPEDCHFCSQSGLFSSPVRSAWLDIPSLVEAAKQTAKSGATEFCIVAAVRGPDARLLSQVAAGIEAIRNEVEINVACSLGMLTAEQVEQLAAMGVHRYNHNLETARSYFTNVVTTHTWEERWQTLTMVRDAGMEVCCGGILGMGETLEQRAEFAANLAELDPDEVPLNFLNPRPGTPFGDLEVLPAGEALKAVGAFRLALPRTMLRFAGGREITLGDLGAKRGILGGINAVIVGNYLTTLGRPAEADLELLEDLQMPLKALNASL</sequence>
<accession>A0PP05</accession>
<name>BIOB_MYCUA</name>
<feature type="chain" id="PRO_0000381488" description="Biotin synthase">
    <location>
        <begin position="1"/>
        <end position="350"/>
    </location>
</feature>
<feature type="domain" description="Radical SAM core" evidence="2">
    <location>
        <begin position="71"/>
        <end position="296"/>
    </location>
</feature>
<feature type="region of interest" description="Disordered" evidence="3">
    <location>
        <begin position="1"/>
        <end position="20"/>
    </location>
</feature>
<feature type="compositionally biased region" description="Polar residues" evidence="3">
    <location>
        <begin position="1"/>
        <end position="13"/>
    </location>
</feature>
<feature type="binding site" evidence="1">
    <location>
        <position position="86"/>
    </location>
    <ligand>
        <name>[4Fe-4S] cluster</name>
        <dbReference type="ChEBI" id="CHEBI:49883"/>
        <note>4Fe-4S-S-AdoMet</note>
    </ligand>
</feature>
<feature type="binding site" evidence="1">
    <location>
        <position position="90"/>
    </location>
    <ligand>
        <name>[4Fe-4S] cluster</name>
        <dbReference type="ChEBI" id="CHEBI:49883"/>
        <note>4Fe-4S-S-AdoMet</note>
    </ligand>
</feature>
<feature type="binding site" evidence="1">
    <location>
        <position position="93"/>
    </location>
    <ligand>
        <name>[4Fe-4S] cluster</name>
        <dbReference type="ChEBI" id="CHEBI:49883"/>
        <note>4Fe-4S-S-AdoMet</note>
    </ligand>
</feature>
<feature type="binding site" evidence="1">
    <location>
        <position position="129"/>
    </location>
    <ligand>
        <name>[2Fe-2S] cluster</name>
        <dbReference type="ChEBI" id="CHEBI:190135"/>
    </ligand>
</feature>
<feature type="binding site" evidence="1">
    <location>
        <position position="162"/>
    </location>
    <ligand>
        <name>[2Fe-2S] cluster</name>
        <dbReference type="ChEBI" id="CHEBI:190135"/>
    </ligand>
</feature>
<feature type="binding site" evidence="1">
    <location>
        <position position="221"/>
    </location>
    <ligand>
        <name>[2Fe-2S] cluster</name>
        <dbReference type="ChEBI" id="CHEBI:190135"/>
    </ligand>
</feature>
<feature type="binding site" evidence="1">
    <location>
        <position position="291"/>
    </location>
    <ligand>
        <name>[2Fe-2S] cluster</name>
        <dbReference type="ChEBI" id="CHEBI:190135"/>
    </ligand>
</feature>